<evidence type="ECO:0000255" key="1">
    <source>
        <dbReference type="HAMAP-Rule" id="MF_00034"/>
    </source>
</evidence>
<comment type="function">
    <text evidence="1">The RuvA-RuvB-RuvC complex processes Holliday junction (HJ) DNA during genetic recombination and DNA repair. Endonuclease that resolves HJ intermediates. Cleaves cruciform DNA by making single-stranded nicks across the HJ at symmetrical positions within the homologous arms, yielding a 5'-phosphate and a 3'-hydroxyl group; requires a central core of homology in the junction. The consensus cleavage sequence is 5'-(A/T)TT(C/G)-3'. Cleavage occurs on the 3'-side of the TT dinucleotide at the point of strand exchange. HJ branch migration catalyzed by RuvA-RuvB allows RuvC to scan DNA until it finds its consensus sequence, where it cleaves and resolves the cruciform DNA.</text>
</comment>
<comment type="catalytic activity">
    <reaction evidence="1">
        <text>Endonucleolytic cleavage at a junction such as a reciprocal single-stranded crossover between two homologous DNA duplexes (Holliday junction).</text>
        <dbReference type="EC" id="3.1.21.10"/>
    </reaction>
</comment>
<comment type="cofactor">
    <cofactor evidence="1">
        <name>Mg(2+)</name>
        <dbReference type="ChEBI" id="CHEBI:18420"/>
    </cofactor>
    <text evidence="1">Binds 2 Mg(2+) ion per subunit.</text>
</comment>
<comment type="subunit">
    <text evidence="1">Homodimer which binds Holliday junction (HJ) DNA. The HJ becomes 2-fold symmetrical on binding to RuvC with unstacked arms; it has a different conformation from HJ DNA in complex with RuvA. In the full resolvosome a probable DNA-RuvA(4)-RuvB(12)-RuvC(2) complex forms which resolves the HJ.</text>
</comment>
<comment type="subcellular location">
    <subcellularLocation>
        <location evidence="1">Cytoplasm</location>
    </subcellularLocation>
</comment>
<comment type="similarity">
    <text evidence="1">Belongs to the RuvC family.</text>
</comment>
<gene>
    <name evidence="1" type="primary">ruvC</name>
    <name type="ordered locus">ECA2493</name>
</gene>
<name>RUVC_PECAS</name>
<reference key="1">
    <citation type="journal article" date="2004" name="Proc. Natl. Acad. Sci. U.S.A.">
        <title>Genome sequence of the enterobacterial phytopathogen Erwinia carotovora subsp. atroseptica and characterization of virulence factors.</title>
        <authorList>
            <person name="Bell K.S."/>
            <person name="Sebaihia M."/>
            <person name="Pritchard L."/>
            <person name="Holden M.T.G."/>
            <person name="Hyman L.J."/>
            <person name="Holeva M.C."/>
            <person name="Thomson N.R."/>
            <person name="Bentley S.D."/>
            <person name="Churcher L.J.C."/>
            <person name="Mungall K."/>
            <person name="Atkin R."/>
            <person name="Bason N."/>
            <person name="Brooks K."/>
            <person name="Chillingworth T."/>
            <person name="Clark K."/>
            <person name="Doggett J."/>
            <person name="Fraser A."/>
            <person name="Hance Z."/>
            <person name="Hauser H."/>
            <person name="Jagels K."/>
            <person name="Moule S."/>
            <person name="Norbertczak H."/>
            <person name="Ormond D."/>
            <person name="Price C."/>
            <person name="Quail M.A."/>
            <person name="Sanders M."/>
            <person name="Walker D."/>
            <person name="Whitehead S."/>
            <person name="Salmond G.P.C."/>
            <person name="Birch P.R.J."/>
            <person name="Parkhill J."/>
            <person name="Toth I.K."/>
        </authorList>
    </citation>
    <scope>NUCLEOTIDE SEQUENCE [LARGE SCALE GENOMIC DNA]</scope>
    <source>
        <strain>SCRI 1043 / ATCC BAA-672</strain>
    </source>
</reference>
<sequence>MTIIVGIDPGSRVTGYGIIRQQGRHLTYLGSGCIRTVVDDMPTRLKLIYAGVSEIITQFQPDCMAIEQVFMAKNPDSALKLGQARGVAIVAGVNQDLPVFEYAARLVKKTVVGTGAADKKQVQHMVRSLLKLSASPQADAADALAIAITHCHFNQSLLRTAAVKVNPLAG</sequence>
<keyword id="KW-0963">Cytoplasm</keyword>
<keyword id="KW-0227">DNA damage</keyword>
<keyword id="KW-0233">DNA recombination</keyword>
<keyword id="KW-0234">DNA repair</keyword>
<keyword id="KW-0238">DNA-binding</keyword>
<keyword id="KW-0255">Endonuclease</keyword>
<keyword id="KW-0378">Hydrolase</keyword>
<keyword id="KW-0460">Magnesium</keyword>
<keyword id="KW-0479">Metal-binding</keyword>
<keyword id="KW-0540">Nuclease</keyword>
<keyword id="KW-1185">Reference proteome</keyword>
<feature type="chain" id="PRO_0000225144" description="Crossover junction endodeoxyribonuclease RuvC">
    <location>
        <begin position="1"/>
        <end position="170"/>
    </location>
</feature>
<feature type="active site" evidence="1">
    <location>
        <position position="8"/>
    </location>
</feature>
<feature type="active site" evidence="1">
    <location>
        <position position="67"/>
    </location>
</feature>
<feature type="active site" evidence="1">
    <location>
        <position position="139"/>
    </location>
</feature>
<feature type="binding site" evidence="1">
    <location>
        <position position="8"/>
    </location>
    <ligand>
        <name>Mg(2+)</name>
        <dbReference type="ChEBI" id="CHEBI:18420"/>
        <label>1</label>
    </ligand>
</feature>
<feature type="binding site" evidence="1">
    <location>
        <position position="67"/>
    </location>
    <ligand>
        <name>Mg(2+)</name>
        <dbReference type="ChEBI" id="CHEBI:18420"/>
        <label>2</label>
    </ligand>
</feature>
<feature type="binding site" evidence="1">
    <location>
        <position position="139"/>
    </location>
    <ligand>
        <name>Mg(2+)</name>
        <dbReference type="ChEBI" id="CHEBI:18420"/>
        <label>1</label>
    </ligand>
</feature>
<dbReference type="EC" id="3.1.21.10" evidence="1"/>
<dbReference type="EMBL" id="BX950851">
    <property type="protein sequence ID" value="CAG75393.1"/>
    <property type="molecule type" value="Genomic_DNA"/>
</dbReference>
<dbReference type="RefSeq" id="WP_011094040.1">
    <property type="nucleotide sequence ID" value="NC_004547.2"/>
</dbReference>
<dbReference type="SMR" id="Q6D4A0"/>
<dbReference type="STRING" id="218491.ECA2493"/>
<dbReference type="GeneID" id="57208797"/>
<dbReference type="KEGG" id="eca:ECA2493"/>
<dbReference type="PATRIC" id="fig|218491.5.peg.2523"/>
<dbReference type="eggNOG" id="COG0817">
    <property type="taxonomic scope" value="Bacteria"/>
</dbReference>
<dbReference type="HOGENOM" id="CLU_091257_3_1_6"/>
<dbReference type="OrthoDB" id="9805499at2"/>
<dbReference type="Proteomes" id="UP000007966">
    <property type="component" value="Chromosome"/>
</dbReference>
<dbReference type="GO" id="GO:0005737">
    <property type="term" value="C:cytoplasm"/>
    <property type="evidence" value="ECO:0007669"/>
    <property type="project" value="UniProtKB-SubCell"/>
</dbReference>
<dbReference type="GO" id="GO:0048476">
    <property type="term" value="C:Holliday junction resolvase complex"/>
    <property type="evidence" value="ECO:0007669"/>
    <property type="project" value="UniProtKB-UniRule"/>
</dbReference>
<dbReference type="GO" id="GO:0008821">
    <property type="term" value="F:crossover junction DNA endonuclease activity"/>
    <property type="evidence" value="ECO:0007669"/>
    <property type="project" value="UniProtKB-UniRule"/>
</dbReference>
<dbReference type="GO" id="GO:0003677">
    <property type="term" value="F:DNA binding"/>
    <property type="evidence" value="ECO:0007669"/>
    <property type="project" value="UniProtKB-KW"/>
</dbReference>
<dbReference type="GO" id="GO:0000287">
    <property type="term" value="F:magnesium ion binding"/>
    <property type="evidence" value="ECO:0007669"/>
    <property type="project" value="UniProtKB-UniRule"/>
</dbReference>
<dbReference type="GO" id="GO:0006310">
    <property type="term" value="P:DNA recombination"/>
    <property type="evidence" value="ECO:0007669"/>
    <property type="project" value="UniProtKB-UniRule"/>
</dbReference>
<dbReference type="GO" id="GO:0006281">
    <property type="term" value="P:DNA repair"/>
    <property type="evidence" value="ECO:0007669"/>
    <property type="project" value="UniProtKB-UniRule"/>
</dbReference>
<dbReference type="CDD" id="cd16962">
    <property type="entry name" value="RuvC"/>
    <property type="match status" value="1"/>
</dbReference>
<dbReference type="FunFam" id="3.30.420.10:FF:000002">
    <property type="entry name" value="Crossover junction endodeoxyribonuclease RuvC"/>
    <property type="match status" value="1"/>
</dbReference>
<dbReference type="Gene3D" id="3.30.420.10">
    <property type="entry name" value="Ribonuclease H-like superfamily/Ribonuclease H"/>
    <property type="match status" value="1"/>
</dbReference>
<dbReference type="HAMAP" id="MF_00034">
    <property type="entry name" value="RuvC"/>
    <property type="match status" value="1"/>
</dbReference>
<dbReference type="InterPro" id="IPR012337">
    <property type="entry name" value="RNaseH-like_sf"/>
</dbReference>
<dbReference type="InterPro" id="IPR036397">
    <property type="entry name" value="RNaseH_sf"/>
</dbReference>
<dbReference type="InterPro" id="IPR020563">
    <property type="entry name" value="X-over_junc_endoDNase_Mg_BS"/>
</dbReference>
<dbReference type="InterPro" id="IPR002176">
    <property type="entry name" value="X-over_junc_endoDNase_RuvC"/>
</dbReference>
<dbReference type="NCBIfam" id="TIGR00228">
    <property type="entry name" value="ruvC"/>
    <property type="match status" value="1"/>
</dbReference>
<dbReference type="PANTHER" id="PTHR30194">
    <property type="entry name" value="CROSSOVER JUNCTION ENDODEOXYRIBONUCLEASE RUVC"/>
    <property type="match status" value="1"/>
</dbReference>
<dbReference type="PANTHER" id="PTHR30194:SF3">
    <property type="entry name" value="CROSSOVER JUNCTION ENDODEOXYRIBONUCLEASE RUVC"/>
    <property type="match status" value="1"/>
</dbReference>
<dbReference type="Pfam" id="PF02075">
    <property type="entry name" value="RuvC"/>
    <property type="match status" value="1"/>
</dbReference>
<dbReference type="PRINTS" id="PR00696">
    <property type="entry name" value="RSOLVASERUVC"/>
</dbReference>
<dbReference type="SUPFAM" id="SSF53098">
    <property type="entry name" value="Ribonuclease H-like"/>
    <property type="match status" value="1"/>
</dbReference>
<dbReference type="PROSITE" id="PS01321">
    <property type="entry name" value="RUVC"/>
    <property type="match status" value="1"/>
</dbReference>
<protein>
    <recommendedName>
        <fullName evidence="1">Crossover junction endodeoxyribonuclease RuvC</fullName>
        <ecNumber evidence="1">3.1.21.10</ecNumber>
    </recommendedName>
    <alternativeName>
        <fullName evidence="1">Holliday junction nuclease RuvC</fullName>
    </alternativeName>
    <alternativeName>
        <fullName evidence="1">Holliday junction resolvase RuvC</fullName>
    </alternativeName>
</protein>
<proteinExistence type="inferred from homology"/>
<organism>
    <name type="scientific">Pectobacterium atrosepticum (strain SCRI 1043 / ATCC BAA-672)</name>
    <name type="common">Erwinia carotovora subsp. atroseptica</name>
    <dbReference type="NCBI Taxonomy" id="218491"/>
    <lineage>
        <taxon>Bacteria</taxon>
        <taxon>Pseudomonadati</taxon>
        <taxon>Pseudomonadota</taxon>
        <taxon>Gammaproteobacteria</taxon>
        <taxon>Enterobacterales</taxon>
        <taxon>Pectobacteriaceae</taxon>
        <taxon>Pectobacterium</taxon>
    </lineage>
</organism>
<accession>Q6D4A0</accession>